<accession>A3Q7S1</accession>
<name>RRAAH_MYCSJ</name>
<sequence>MTIEPRATADLVDDIGPDVRSCDLQLRQFGGRPEFAGRVTTVRCFQDNALLKSVLSEPGDGGVLVIDGDGSLHTALVGDVIAALGRDNGWSGLIINGAVRDASTLRTLDIGIKALGTNPRKSTKTGAGERDVPVEFGGVTFTPGDVAYSDDDGIVIVTP</sequence>
<reference key="1">
    <citation type="submission" date="2007-02" db="EMBL/GenBank/DDBJ databases">
        <title>Complete sequence of Mycobacterium sp. JLS.</title>
        <authorList>
            <consortium name="US DOE Joint Genome Institute"/>
            <person name="Copeland A."/>
            <person name="Lucas S."/>
            <person name="Lapidus A."/>
            <person name="Barry K."/>
            <person name="Detter J.C."/>
            <person name="Glavina del Rio T."/>
            <person name="Hammon N."/>
            <person name="Israni S."/>
            <person name="Dalin E."/>
            <person name="Tice H."/>
            <person name="Pitluck S."/>
            <person name="Chain P."/>
            <person name="Malfatti S."/>
            <person name="Shin M."/>
            <person name="Vergez L."/>
            <person name="Schmutz J."/>
            <person name="Larimer F."/>
            <person name="Land M."/>
            <person name="Hauser L."/>
            <person name="Kyrpides N."/>
            <person name="Mikhailova N."/>
            <person name="Miller C.D."/>
            <person name="Anderson A.J."/>
            <person name="Sims R.C."/>
            <person name="Richardson P."/>
        </authorList>
    </citation>
    <scope>NUCLEOTIDE SEQUENCE [LARGE SCALE GENOMIC DNA]</scope>
    <source>
        <strain>JLS</strain>
    </source>
</reference>
<evidence type="ECO:0000250" key="1"/>
<evidence type="ECO:0000305" key="2"/>
<dbReference type="EC" id="4.1.3.17"/>
<dbReference type="EC" id="4.1.1.112"/>
<dbReference type="EMBL" id="CP000580">
    <property type="protein sequence ID" value="ABO01199.1"/>
    <property type="molecule type" value="Genomic_DNA"/>
</dbReference>
<dbReference type="SMR" id="A3Q7S1"/>
<dbReference type="KEGG" id="mjl:Mjls_5435"/>
<dbReference type="HOGENOM" id="CLU_072626_4_0_11"/>
<dbReference type="BioCyc" id="MSP164757:G1G8C-5496-MONOMER"/>
<dbReference type="GO" id="GO:0047443">
    <property type="term" value="F:4-hydroxy-4-methyl-2-oxoglutarate aldolase activity"/>
    <property type="evidence" value="ECO:0007669"/>
    <property type="project" value="UniProtKB-EC"/>
</dbReference>
<dbReference type="GO" id="GO:0046872">
    <property type="term" value="F:metal ion binding"/>
    <property type="evidence" value="ECO:0007669"/>
    <property type="project" value="UniProtKB-KW"/>
</dbReference>
<dbReference type="GO" id="GO:0008948">
    <property type="term" value="F:oxaloacetate decarboxylase activity"/>
    <property type="evidence" value="ECO:0007669"/>
    <property type="project" value="UniProtKB-EC"/>
</dbReference>
<dbReference type="GO" id="GO:0008428">
    <property type="term" value="F:ribonuclease inhibitor activity"/>
    <property type="evidence" value="ECO:0007669"/>
    <property type="project" value="InterPro"/>
</dbReference>
<dbReference type="GO" id="GO:0051252">
    <property type="term" value="P:regulation of RNA metabolic process"/>
    <property type="evidence" value="ECO:0007669"/>
    <property type="project" value="InterPro"/>
</dbReference>
<dbReference type="CDD" id="cd16841">
    <property type="entry name" value="RraA_family"/>
    <property type="match status" value="1"/>
</dbReference>
<dbReference type="Gene3D" id="3.50.30.40">
    <property type="entry name" value="Ribonuclease E inhibitor RraA/RraA-like"/>
    <property type="match status" value="1"/>
</dbReference>
<dbReference type="InterPro" id="IPR010203">
    <property type="entry name" value="RraA"/>
</dbReference>
<dbReference type="InterPro" id="IPR005493">
    <property type="entry name" value="RraA/RraA-like"/>
</dbReference>
<dbReference type="InterPro" id="IPR036704">
    <property type="entry name" value="RraA/RraA-like_sf"/>
</dbReference>
<dbReference type="NCBIfam" id="TIGR01935">
    <property type="entry name" value="NOT-MenG"/>
    <property type="match status" value="1"/>
</dbReference>
<dbReference type="NCBIfam" id="NF006875">
    <property type="entry name" value="PRK09372.1"/>
    <property type="match status" value="1"/>
</dbReference>
<dbReference type="PANTHER" id="PTHR33254">
    <property type="entry name" value="4-HYDROXY-4-METHYL-2-OXOGLUTARATE ALDOLASE 3-RELATED"/>
    <property type="match status" value="1"/>
</dbReference>
<dbReference type="PANTHER" id="PTHR33254:SF4">
    <property type="entry name" value="4-HYDROXY-4-METHYL-2-OXOGLUTARATE ALDOLASE 3-RELATED"/>
    <property type="match status" value="1"/>
</dbReference>
<dbReference type="Pfam" id="PF03737">
    <property type="entry name" value="RraA-like"/>
    <property type="match status" value="1"/>
</dbReference>
<dbReference type="SUPFAM" id="SSF89562">
    <property type="entry name" value="RraA-like"/>
    <property type="match status" value="1"/>
</dbReference>
<organism>
    <name type="scientific">Mycobacterium sp. (strain JLS)</name>
    <dbReference type="NCBI Taxonomy" id="164757"/>
    <lineage>
        <taxon>Bacteria</taxon>
        <taxon>Bacillati</taxon>
        <taxon>Actinomycetota</taxon>
        <taxon>Actinomycetes</taxon>
        <taxon>Mycobacteriales</taxon>
        <taxon>Mycobacteriaceae</taxon>
        <taxon>Mycobacterium</taxon>
    </lineage>
</organism>
<proteinExistence type="inferred from homology"/>
<keyword id="KW-0456">Lyase</keyword>
<keyword id="KW-0479">Metal-binding</keyword>
<comment type="function">
    <text evidence="1">Catalyzes the aldol cleavage of 4-hydroxy-4-methyl-2-oxoglutarate (HMG) into 2 molecules of pyruvate. Also contains a secondary oxaloacetate (OAA) decarboxylase activity due to the common pyruvate enolate transition state formed following C-C bond cleavage in the retro-aldol and decarboxylation reactions (By similarity).</text>
</comment>
<comment type="catalytic activity">
    <reaction>
        <text>4-hydroxy-4-methyl-2-oxoglutarate = 2 pyruvate</text>
        <dbReference type="Rhea" id="RHEA:22748"/>
        <dbReference type="ChEBI" id="CHEBI:15361"/>
        <dbReference type="ChEBI" id="CHEBI:58276"/>
        <dbReference type="EC" id="4.1.3.17"/>
    </reaction>
</comment>
<comment type="catalytic activity">
    <reaction>
        <text>oxaloacetate + H(+) = pyruvate + CO2</text>
        <dbReference type="Rhea" id="RHEA:15641"/>
        <dbReference type="ChEBI" id="CHEBI:15361"/>
        <dbReference type="ChEBI" id="CHEBI:15378"/>
        <dbReference type="ChEBI" id="CHEBI:16452"/>
        <dbReference type="ChEBI" id="CHEBI:16526"/>
        <dbReference type="EC" id="4.1.1.112"/>
    </reaction>
</comment>
<comment type="cofactor">
    <cofactor evidence="1">
        <name>a divalent metal cation</name>
        <dbReference type="ChEBI" id="CHEBI:60240"/>
    </cofactor>
    <text evidence="1">Divalent metal cation.</text>
</comment>
<comment type="subunit">
    <text evidence="1">Homotrimer.</text>
</comment>
<comment type="similarity">
    <text evidence="2">Belongs to the class II aldolase/RraA-like family.</text>
</comment>
<gene>
    <name type="ordered locus">Mjls_5435</name>
</gene>
<feature type="chain" id="PRO_1000013850" description="Putative 4-hydroxy-4-methyl-2-oxoglutarate aldolase">
    <location>
        <begin position="1"/>
        <end position="159"/>
    </location>
</feature>
<feature type="binding site" evidence="1">
    <location>
        <begin position="78"/>
        <end position="81"/>
    </location>
    <ligand>
        <name>substrate</name>
    </ligand>
</feature>
<feature type="binding site" evidence="1">
    <location>
        <position position="100"/>
    </location>
    <ligand>
        <name>substrate</name>
    </ligand>
</feature>
<feature type="binding site" evidence="1">
    <location>
        <position position="101"/>
    </location>
    <ligand>
        <name>a divalent metal cation</name>
        <dbReference type="ChEBI" id="CHEBI:60240"/>
    </ligand>
</feature>
<protein>
    <recommendedName>
        <fullName>Putative 4-hydroxy-4-methyl-2-oxoglutarate aldolase</fullName>
        <shortName>HMG aldolase</shortName>
        <ecNumber>4.1.3.17</ecNumber>
    </recommendedName>
    <alternativeName>
        <fullName>Oxaloacetate decarboxylase</fullName>
        <shortName>OAA decarboxylase</shortName>
        <ecNumber>4.1.1.112</ecNumber>
    </alternativeName>
    <alternativeName>
        <fullName>Regulator of ribonuclease activity homolog</fullName>
    </alternativeName>
    <alternativeName>
        <fullName>RraA-like protein</fullName>
    </alternativeName>
</protein>